<comment type="function">
    <text evidence="1">Catalyzes the reversible conversion of 3-phosphohydroxypyruvate to phosphoserine and of 3-hydroxy-2-oxo-4-phosphonooxybutanoate to phosphohydroxythreonine.</text>
</comment>
<comment type="catalytic activity">
    <reaction evidence="1">
        <text>O-phospho-L-serine + 2-oxoglutarate = 3-phosphooxypyruvate + L-glutamate</text>
        <dbReference type="Rhea" id="RHEA:14329"/>
        <dbReference type="ChEBI" id="CHEBI:16810"/>
        <dbReference type="ChEBI" id="CHEBI:18110"/>
        <dbReference type="ChEBI" id="CHEBI:29985"/>
        <dbReference type="ChEBI" id="CHEBI:57524"/>
        <dbReference type="EC" id="2.6.1.52"/>
    </reaction>
</comment>
<comment type="catalytic activity">
    <reaction evidence="1">
        <text>4-(phosphooxy)-L-threonine + 2-oxoglutarate = (R)-3-hydroxy-2-oxo-4-phosphooxybutanoate + L-glutamate</text>
        <dbReference type="Rhea" id="RHEA:16573"/>
        <dbReference type="ChEBI" id="CHEBI:16810"/>
        <dbReference type="ChEBI" id="CHEBI:29985"/>
        <dbReference type="ChEBI" id="CHEBI:58452"/>
        <dbReference type="ChEBI" id="CHEBI:58538"/>
        <dbReference type="EC" id="2.6.1.52"/>
    </reaction>
</comment>
<comment type="cofactor">
    <cofactor evidence="1">
        <name>pyridoxal 5'-phosphate</name>
        <dbReference type="ChEBI" id="CHEBI:597326"/>
    </cofactor>
    <text evidence="1">Binds 1 pyridoxal phosphate per subunit.</text>
</comment>
<comment type="pathway">
    <text evidence="1">Amino-acid biosynthesis; L-serine biosynthesis; L-serine from 3-phospho-D-glycerate: step 2/3.</text>
</comment>
<comment type="pathway">
    <text evidence="1">Cofactor biosynthesis; pyridoxine 5'-phosphate biosynthesis; pyridoxine 5'-phosphate from D-erythrose 4-phosphate: step 3/5.</text>
</comment>
<comment type="subunit">
    <text evidence="1">Homodimer.</text>
</comment>
<comment type="subcellular location">
    <subcellularLocation>
        <location evidence="1">Cytoplasm</location>
    </subcellularLocation>
</comment>
<comment type="similarity">
    <text evidence="1">Belongs to the class-V pyridoxal-phosphate-dependent aminotransferase family. SerC subfamily.</text>
</comment>
<comment type="sequence caution" evidence="2">
    <conflict type="erroneous initiation">
        <sequence resource="EMBL-CDS" id="AAS68942"/>
    </conflict>
</comment>
<reference key="1">
    <citation type="journal article" date="2004" name="J. Bacteriol.">
        <title>Comparative genomics of two Leptospira interrogans serovars reveals novel insights into physiology and pathogenesis.</title>
        <authorList>
            <person name="Nascimento A.L.T.O."/>
            <person name="Ko A.I."/>
            <person name="Martins E.A.L."/>
            <person name="Monteiro-Vitorello C.B."/>
            <person name="Ho P.L."/>
            <person name="Haake D.A."/>
            <person name="Verjovski-Almeida S."/>
            <person name="Hartskeerl R.A."/>
            <person name="Marques M.V."/>
            <person name="Oliveira M.C."/>
            <person name="Menck C.F.M."/>
            <person name="Leite L.C.C."/>
            <person name="Carrer H."/>
            <person name="Coutinho L.L."/>
            <person name="Degrave W.M."/>
            <person name="Dellagostin O.A."/>
            <person name="El-Dorry H."/>
            <person name="Ferro E.S."/>
            <person name="Ferro M.I.T."/>
            <person name="Furlan L.R."/>
            <person name="Gamberini M."/>
            <person name="Giglioti E.A."/>
            <person name="Goes-Neto A."/>
            <person name="Goldman G.H."/>
            <person name="Goldman M.H.S."/>
            <person name="Harakava R."/>
            <person name="Jeronimo S.M.B."/>
            <person name="Junqueira-de-Azevedo I.L.M."/>
            <person name="Kimura E.T."/>
            <person name="Kuramae E.E."/>
            <person name="Lemos E.G.M."/>
            <person name="Lemos M.V.F."/>
            <person name="Marino C.L."/>
            <person name="Nunes L.R."/>
            <person name="de Oliveira R.C."/>
            <person name="Pereira G.G."/>
            <person name="Reis M.S."/>
            <person name="Schriefer A."/>
            <person name="Siqueira W.J."/>
            <person name="Sommer P."/>
            <person name="Tsai S.M."/>
            <person name="Simpson A.J.G."/>
            <person name="Ferro J.A."/>
            <person name="Camargo L.E.A."/>
            <person name="Kitajima J.P."/>
            <person name="Setubal J.C."/>
            <person name="Van Sluys M.A."/>
        </authorList>
    </citation>
    <scope>NUCLEOTIDE SEQUENCE [LARGE SCALE GENOMIC DNA]</scope>
    <source>
        <strain>Fiocruz L1-130</strain>
    </source>
</reference>
<name>SERC_LEPIC</name>
<gene>
    <name evidence="1" type="primary">serC</name>
    <name type="ordered locus">LIC_10315</name>
</gene>
<accession>Q72VI2</accession>
<protein>
    <recommendedName>
        <fullName evidence="1">Phosphoserine aminotransferase</fullName>
        <ecNumber evidence="1">2.6.1.52</ecNumber>
    </recommendedName>
    <alternativeName>
        <fullName evidence="1">Phosphohydroxythreonine aminotransferase</fullName>
        <shortName evidence="1">PSAT</shortName>
    </alternativeName>
</protein>
<evidence type="ECO:0000255" key="1">
    <source>
        <dbReference type="HAMAP-Rule" id="MF_00160"/>
    </source>
</evidence>
<evidence type="ECO:0000305" key="2"/>
<sequence>MYLFQERIYNFGAGPAMLPNEVMEIAAAEFLNYKGSGMSVMEVSHREPLFEDVITEAEILLRKLLNLGEDYSIAFFSGGATLHFSALPLNLLKEGESFDVAHTGIWTKKAWEEGLKFNEVNVIYDSTNNHFTDVPVLTDSNLSGKGKYLHITSNNTIYGTQYPEIPKIKQIPLVADMTSELLSRKIDVKDFGVIFAGAQKNIGPSGLSLAIIRNDLLGISGRKIPILLDYSVMVKNRSLYNTPSTYSIYIAKLVFEWLLKLGGIEAIEKVNEQKAKLIYDFIDSSSLYVCPVQKRARSKMNVVFLLKDKNLDSKFLDEAEKNGLHGLGGHRLVGGFRASIYNSMPLTGVQKLVSFMKDFESKI</sequence>
<keyword id="KW-0028">Amino-acid biosynthesis</keyword>
<keyword id="KW-0032">Aminotransferase</keyword>
<keyword id="KW-0963">Cytoplasm</keyword>
<keyword id="KW-0663">Pyridoxal phosphate</keyword>
<keyword id="KW-0664">Pyridoxine biosynthesis</keyword>
<keyword id="KW-0718">Serine biosynthesis</keyword>
<keyword id="KW-0808">Transferase</keyword>
<feature type="chain" id="PRO_0000150181" description="Phosphoserine aminotransferase">
    <location>
        <begin position="1"/>
        <end position="363"/>
    </location>
</feature>
<feature type="binding site" evidence="1">
    <location>
        <position position="46"/>
    </location>
    <ligand>
        <name>L-glutamate</name>
        <dbReference type="ChEBI" id="CHEBI:29985"/>
    </ligand>
</feature>
<feature type="binding site" evidence="1">
    <location>
        <begin position="80"/>
        <end position="81"/>
    </location>
    <ligand>
        <name>pyridoxal 5'-phosphate</name>
        <dbReference type="ChEBI" id="CHEBI:597326"/>
    </ligand>
</feature>
<feature type="binding site" evidence="1">
    <location>
        <position position="106"/>
    </location>
    <ligand>
        <name>pyridoxal 5'-phosphate</name>
        <dbReference type="ChEBI" id="CHEBI:597326"/>
    </ligand>
</feature>
<feature type="binding site" evidence="1">
    <location>
        <position position="156"/>
    </location>
    <ligand>
        <name>pyridoxal 5'-phosphate</name>
        <dbReference type="ChEBI" id="CHEBI:597326"/>
    </ligand>
</feature>
<feature type="binding site" evidence="1">
    <location>
        <position position="176"/>
    </location>
    <ligand>
        <name>pyridoxal 5'-phosphate</name>
        <dbReference type="ChEBI" id="CHEBI:597326"/>
    </ligand>
</feature>
<feature type="binding site" evidence="1">
    <location>
        <position position="199"/>
    </location>
    <ligand>
        <name>pyridoxal 5'-phosphate</name>
        <dbReference type="ChEBI" id="CHEBI:597326"/>
    </ligand>
</feature>
<feature type="binding site" evidence="1">
    <location>
        <begin position="241"/>
        <end position="242"/>
    </location>
    <ligand>
        <name>pyridoxal 5'-phosphate</name>
        <dbReference type="ChEBI" id="CHEBI:597326"/>
    </ligand>
</feature>
<feature type="modified residue" description="N6-(pyridoxal phosphate)lysine" evidence="1">
    <location>
        <position position="200"/>
    </location>
</feature>
<proteinExistence type="inferred from homology"/>
<organism>
    <name type="scientific">Leptospira interrogans serogroup Icterohaemorrhagiae serovar copenhageni (strain Fiocruz L1-130)</name>
    <dbReference type="NCBI Taxonomy" id="267671"/>
    <lineage>
        <taxon>Bacteria</taxon>
        <taxon>Pseudomonadati</taxon>
        <taxon>Spirochaetota</taxon>
        <taxon>Spirochaetia</taxon>
        <taxon>Leptospirales</taxon>
        <taxon>Leptospiraceae</taxon>
        <taxon>Leptospira</taxon>
    </lineage>
</organism>
<dbReference type="EC" id="2.6.1.52" evidence="1"/>
<dbReference type="EMBL" id="AE016823">
    <property type="protein sequence ID" value="AAS68942.1"/>
    <property type="status" value="ALT_INIT"/>
    <property type="molecule type" value="Genomic_DNA"/>
</dbReference>
<dbReference type="SMR" id="Q72VI2"/>
<dbReference type="KEGG" id="lic:LIC_10315"/>
<dbReference type="HOGENOM" id="CLU_034866_0_2_12"/>
<dbReference type="UniPathway" id="UPA00135">
    <property type="reaction ID" value="UER00197"/>
</dbReference>
<dbReference type="UniPathway" id="UPA00244">
    <property type="reaction ID" value="UER00311"/>
</dbReference>
<dbReference type="Proteomes" id="UP000007037">
    <property type="component" value="Chromosome I"/>
</dbReference>
<dbReference type="GO" id="GO:0005737">
    <property type="term" value="C:cytoplasm"/>
    <property type="evidence" value="ECO:0007669"/>
    <property type="project" value="UniProtKB-SubCell"/>
</dbReference>
<dbReference type="GO" id="GO:0004648">
    <property type="term" value="F:O-phospho-L-serine:2-oxoglutarate aminotransferase activity"/>
    <property type="evidence" value="ECO:0007669"/>
    <property type="project" value="UniProtKB-UniRule"/>
</dbReference>
<dbReference type="GO" id="GO:0030170">
    <property type="term" value="F:pyridoxal phosphate binding"/>
    <property type="evidence" value="ECO:0007669"/>
    <property type="project" value="UniProtKB-UniRule"/>
</dbReference>
<dbReference type="GO" id="GO:0006564">
    <property type="term" value="P:L-serine biosynthetic process"/>
    <property type="evidence" value="ECO:0007669"/>
    <property type="project" value="UniProtKB-UniRule"/>
</dbReference>
<dbReference type="GO" id="GO:0008615">
    <property type="term" value="P:pyridoxine biosynthetic process"/>
    <property type="evidence" value="ECO:0007669"/>
    <property type="project" value="UniProtKB-UniRule"/>
</dbReference>
<dbReference type="FunFam" id="3.40.640.10:FF:000010">
    <property type="entry name" value="Phosphoserine aminotransferase"/>
    <property type="match status" value="1"/>
</dbReference>
<dbReference type="FunFam" id="3.90.1150.10:FF:000006">
    <property type="entry name" value="Phosphoserine aminotransferase"/>
    <property type="match status" value="1"/>
</dbReference>
<dbReference type="Gene3D" id="3.90.1150.10">
    <property type="entry name" value="Aspartate Aminotransferase, domain 1"/>
    <property type="match status" value="1"/>
</dbReference>
<dbReference type="Gene3D" id="3.40.640.10">
    <property type="entry name" value="Type I PLP-dependent aspartate aminotransferase-like (Major domain)"/>
    <property type="match status" value="1"/>
</dbReference>
<dbReference type="HAMAP" id="MF_00160">
    <property type="entry name" value="SerC_aminotrans_5"/>
    <property type="match status" value="1"/>
</dbReference>
<dbReference type="InterPro" id="IPR000192">
    <property type="entry name" value="Aminotrans_V_dom"/>
</dbReference>
<dbReference type="InterPro" id="IPR020578">
    <property type="entry name" value="Aminotrans_V_PyrdxlP_BS"/>
</dbReference>
<dbReference type="InterPro" id="IPR022278">
    <property type="entry name" value="Pser_aminoTfrase"/>
</dbReference>
<dbReference type="InterPro" id="IPR015424">
    <property type="entry name" value="PyrdxlP-dep_Trfase"/>
</dbReference>
<dbReference type="InterPro" id="IPR015421">
    <property type="entry name" value="PyrdxlP-dep_Trfase_major"/>
</dbReference>
<dbReference type="InterPro" id="IPR015422">
    <property type="entry name" value="PyrdxlP-dep_Trfase_small"/>
</dbReference>
<dbReference type="NCBIfam" id="NF003764">
    <property type="entry name" value="PRK05355.1"/>
    <property type="match status" value="1"/>
</dbReference>
<dbReference type="NCBIfam" id="TIGR01364">
    <property type="entry name" value="serC_1"/>
    <property type="match status" value="1"/>
</dbReference>
<dbReference type="PANTHER" id="PTHR43247">
    <property type="entry name" value="PHOSPHOSERINE AMINOTRANSFERASE"/>
    <property type="match status" value="1"/>
</dbReference>
<dbReference type="PANTHER" id="PTHR43247:SF1">
    <property type="entry name" value="PHOSPHOSERINE AMINOTRANSFERASE"/>
    <property type="match status" value="1"/>
</dbReference>
<dbReference type="Pfam" id="PF00266">
    <property type="entry name" value="Aminotran_5"/>
    <property type="match status" value="1"/>
</dbReference>
<dbReference type="PIRSF" id="PIRSF000525">
    <property type="entry name" value="SerC"/>
    <property type="match status" value="1"/>
</dbReference>
<dbReference type="SUPFAM" id="SSF53383">
    <property type="entry name" value="PLP-dependent transferases"/>
    <property type="match status" value="1"/>
</dbReference>
<dbReference type="PROSITE" id="PS00595">
    <property type="entry name" value="AA_TRANSFER_CLASS_5"/>
    <property type="match status" value="1"/>
</dbReference>